<keyword id="KW-0678">Repressor</keyword>
<keyword id="KW-0687">Ribonucleoprotein</keyword>
<keyword id="KW-0689">Ribosomal protein</keyword>
<keyword id="KW-0694">RNA-binding</keyword>
<keyword id="KW-0699">rRNA-binding</keyword>
<keyword id="KW-0810">Translation regulation</keyword>
<keyword id="KW-0820">tRNA-binding</keyword>
<proteinExistence type="inferred from homology"/>
<gene>
    <name evidence="1" type="primary">rplA</name>
    <name type="ordered locus">Sez_1459</name>
</gene>
<protein>
    <recommendedName>
        <fullName evidence="1">Large ribosomal subunit protein uL1</fullName>
    </recommendedName>
    <alternativeName>
        <fullName evidence="2">50S ribosomal protein L1</fullName>
    </alternativeName>
</protein>
<accession>B4U475</accession>
<sequence length="229" mass="24489">MAKKSKQMRAALEKVDSTKAYSVEEAVTLAKETNFAKFDASVEVAYNLNIDVRKADQQIRGAMVLPNGTGKTQRVLVFARGAKAEEAKAAGADFVGEDDLVAKINGGWLDFDVVIATPDMMAIVGRLGRVLGPRNLMPNPKTGTVTMDVAKAVEESKGGKITYRADKAGNVQAIIGKVSFDADKLVENFKAFHEVMVKAKPATAKGTYMTNVSITTTQGVGIKVDPSSF</sequence>
<organism>
    <name type="scientific">Streptococcus equi subsp. zooepidemicus (strain MGCS10565)</name>
    <dbReference type="NCBI Taxonomy" id="552526"/>
    <lineage>
        <taxon>Bacteria</taxon>
        <taxon>Bacillati</taxon>
        <taxon>Bacillota</taxon>
        <taxon>Bacilli</taxon>
        <taxon>Lactobacillales</taxon>
        <taxon>Streptococcaceae</taxon>
        <taxon>Streptococcus</taxon>
    </lineage>
</organism>
<name>RL1_STREM</name>
<comment type="function">
    <text evidence="1">Binds directly to 23S rRNA. The L1 stalk is quite mobile in the ribosome, and is involved in E site tRNA release.</text>
</comment>
<comment type="function">
    <text evidence="1">Protein L1 is also a translational repressor protein, it controls the translation of the L11 operon by binding to its mRNA.</text>
</comment>
<comment type="subunit">
    <text evidence="1">Part of the 50S ribosomal subunit.</text>
</comment>
<comment type="similarity">
    <text evidence="1">Belongs to the universal ribosomal protein uL1 family.</text>
</comment>
<dbReference type="EMBL" id="CP001129">
    <property type="protein sequence ID" value="ACG62792.1"/>
    <property type="molecule type" value="Genomic_DNA"/>
</dbReference>
<dbReference type="RefSeq" id="WP_012516054.1">
    <property type="nucleotide sequence ID" value="NC_011134.1"/>
</dbReference>
<dbReference type="SMR" id="B4U475"/>
<dbReference type="KEGG" id="sez:Sez_1459"/>
<dbReference type="HOGENOM" id="CLU_062853_0_0_9"/>
<dbReference type="Proteomes" id="UP000001873">
    <property type="component" value="Chromosome"/>
</dbReference>
<dbReference type="GO" id="GO:0015934">
    <property type="term" value="C:large ribosomal subunit"/>
    <property type="evidence" value="ECO:0007669"/>
    <property type="project" value="InterPro"/>
</dbReference>
<dbReference type="GO" id="GO:0019843">
    <property type="term" value="F:rRNA binding"/>
    <property type="evidence" value="ECO:0007669"/>
    <property type="project" value="UniProtKB-UniRule"/>
</dbReference>
<dbReference type="GO" id="GO:0003735">
    <property type="term" value="F:structural constituent of ribosome"/>
    <property type="evidence" value="ECO:0007669"/>
    <property type="project" value="InterPro"/>
</dbReference>
<dbReference type="GO" id="GO:0000049">
    <property type="term" value="F:tRNA binding"/>
    <property type="evidence" value="ECO:0007669"/>
    <property type="project" value="UniProtKB-KW"/>
</dbReference>
<dbReference type="GO" id="GO:0006417">
    <property type="term" value="P:regulation of translation"/>
    <property type="evidence" value="ECO:0007669"/>
    <property type="project" value="UniProtKB-KW"/>
</dbReference>
<dbReference type="GO" id="GO:0006412">
    <property type="term" value="P:translation"/>
    <property type="evidence" value="ECO:0007669"/>
    <property type="project" value="UniProtKB-UniRule"/>
</dbReference>
<dbReference type="CDD" id="cd00403">
    <property type="entry name" value="Ribosomal_L1"/>
    <property type="match status" value="1"/>
</dbReference>
<dbReference type="FunFam" id="3.40.50.790:FF:000001">
    <property type="entry name" value="50S ribosomal protein L1"/>
    <property type="match status" value="1"/>
</dbReference>
<dbReference type="Gene3D" id="3.30.190.20">
    <property type="match status" value="1"/>
</dbReference>
<dbReference type="Gene3D" id="3.40.50.790">
    <property type="match status" value="1"/>
</dbReference>
<dbReference type="HAMAP" id="MF_01318_B">
    <property type="entry name" value="Ribosomal_uL1_B"/>
    <property type="match status" value="1"/>
</dbReference>
<dbReference type="InterPro" id="IPR005878">
    <property type="entry name" value="Ribosom_uL1_bac-type"/>
</dbReference>
<dbReference type="InterPro" id="IPR002143">
    <property type="entry name" value="Ribosomal_uL1"/>
</dbReference>
<dbReference type="InterPro" id="IPR023674">
    <property type="entry name" value="Ribosomal_uL1-like"/>
</dbReference>
<dbReference type="InterPro" id="IPR028364">
    <property type="entry name" value="Ribosomal_uL1/biogenesis"/>
</dbReference>
<dbReference type="InterPro" id="IPR016095">
    <property type="entry name" value="Ribosomal_uL1_3-a/b-sand"/>
</dbReference>
<dbReference type="InterPro" id="IPR023673">
    <property type="entry name" value="Ribosomal_uL1_CS"/>
</dbReference>
<dbReference type="NCBIfam" id="TIGR01169">
    <property type="entry name" value="rplA_bact"/>
    <property type="match status" value="1"/>
</dbReference>
<dbReference type="PANTHER" id="PTHR36427">
    <property type="entry name" value="54S RIBOSOMAL PROTEIN L1, MITOCHONDRIAL"/>
    <property type="match status" value="1"/>
</dbReference>
<dbReference type="PANTHER" id="PTHR36427:SF3">
    <property type="entry name" value="LARGE RIBOSOMAL SUBUNIT PROTEIN UL1M"/>
    <property type="match status" value="1"/>
</dbReference>
<dbReference type="Pfam" id="PF00687">
    <property type="entry name" value="Ribosomal_L1"/>
    <property type="match status" value="1"/>
</dbReference>
<dbReference type="PIRSF" id="PIRSF002155">
    <property type="entry name" value="Ribosomal_L1"/>
    <property type="match status" value="1"/>
</dbReference>
<dbReference type="SUPFAM" id="SSF56808">
    <property type="entry name" value="Ribosomal protein L1"/>
    <property type="match status" value="1"/>
</dbReference>
<dbReference type="PROSITE" id="PS01199">
    <property type="entry name" value="RIBOSOMAL_L1"/>
    <property type="match status" value="1"/>
</dbReference>
<feature type="chain" id="PRO_1000141463" description="Large ribosomal subunit protein uL1">
    <location>
        <begin position="1"/>
        <end position="229"/>
    </location>
</feature>
<reference key="1">
    <citation type="journal article" date="2008" name="PLoS ONE">
        <title>Genome sequence of a lancefield group C Streptococcus zooepidemicus strain causing epidemic nephritis: new information about an old disease.</title>
        <authorList>
            <person name="Beres S.B."/>
            <person name="Sesso R."/>
            <person name="Pinto S.W.L."/>
            <person name="Hoe N.P."/>
            <person name="Porcella S.F."/>
            <person name="Deleo F.R."/>
            <person name="Musser J.M."/>
        </authorList>
    </citation>
    <scope>NUCLEOTIDE SEQUENCE [LARGE SCALE GENOMIC DNA]</scope>
    <source>
        <strain>MGCS10565</strain>
    </source>
</reference>
<evidence type="ECO:0000255" key="1">
    <source>
        <dbReference type="HAMAP-Rule" id="MF_01318"/>
    </source>
</evidence>
<evidence type="ECO:0000305" key="2"/>